<keyword id="KW-0998">Cell outer membrane</keyword>
<keyword id="KW-0406">Ion transport</keyword>
<keyword id="KW-0472">Membrane</keyword>
<keyword id="KW-0626">Porin</keyword>
<keyword id="KW-0732">Signal</keyword>
<keyword id="KW-0812">Transmembrane</keyword>
<keyword id="KW-1134">Transmembrane beta strand</keyword>
<keyword id="KW-0813">Transport</keyword>
<evidence type="ECO:0000250" key="1"/>
<evidence type="ECO:0000305" key="2"/>
<comment type="function">
    <text evidence="1">Forms pores that allow passive diffusion of small molecules across the outer membrane.</text>
</comment>
<comment type="subunit">
    <text evidence="1">Homotrimer.</text>
</comment>
<comment type="subcellular location">
    <subcellularLocation>
        <location>Cell outer membrane</location>
        <topology>Multi-pass membrane protein</topology>
    </subcellularLocation>
</comment>
<comment type="similarity">
    <text evidence="2">Belongs to the Gram-negative porin family.</text>
</comment>
<protein>
    <recommendedName>
        <fullName>Outer membrane protein P2</fullName>
        <shortName>OMP P2</shortName>
    </recommendedName>
</protein>
<dbReference type="EMBL" id="X73388">
    <property type="protein sequence ID" value="CAA51805.1"/>
    <property type="molecule type" value="Genomic_DNA"/>
</dbReference>
<dbReference type="SMR" id="Q48217"/>
<dbReference type="TCDB" id="1.B.1.3.2">
    <property type="family name" value="the general bacterial porin (gbp) family"/>
</dbReference>
<dbReference type="GO" id="GO:0009279">
    <property type="term" value="C:cell outer membrane"/>
    <property type="evidence" value="ECO:0007669"/>
    <property type="project" value="UniProtKB-SubCell"/>
</dbReference>
<dbReference type="GO" id="GO:0046930">
    <property type="term" value="C:pore complex"/>
    <property type="evidence" value="ECO:0007669"/>
    <property type="project" value="UniProtKB-KW"/>
</dbReference>
<dbReference type="GO" id="GO:0015288">
    <property type="term" value="F:porin activity"/>
    <property type="evidence" value="ECO:0007669"/>
    <property type="project" value="UniProtKB-KW"/>
</dbReference>
<dbReference type="GO" id="GO:0006811">
    <property type="term" value="P:monoatomic ion transport"/>
    <property type="evidence" value="ECO:0007669"/>
    <property type="project" value="UniProtKB-KW"/>
</dbReference>
<dbReference type="CDD" id="cd00342">
    <property type="entry name" value="gram_neg_porins"/>
    <property type="match status" value="1"/>
</dbReference>
<dbReference type="Gene3D" id="2.40.160.10">
    <property type="entry name" value="Porin"/>
    <property type="match status" value="1"/>
</dbReference>
<dbReference type="InterPro" id="IPR050298">
    <property type="entry name" value="Gram-neg_bact_OMP"/>
</dbReference>
<dbReference type="InterPro" id="IPR033900">
    <property type="entry name" value="Gram_neg_porin_domain"/>
</dbReference>
<dbReference type="InterPro" id="IPR023614">
    <property type="entry name" value="Porin_dom_sf"/>
</dbReference>
<dbReference type="PANTHER" id="PTHR34501:SF2">
    <property type="entry name" value="OUTER MEMBRANE PORIN F-RELATED"/>
    <property type="match status" value="1"/>
</dbReference>
<dbReference type="PANTHER" id="PTHR34501">
    <property type="entry name" value="PROTEIN YDDL-RELATED"/>
    <property type="match status" value="1"/>
</dbReference>
<dbReference type="Pfam" id="PF13609">
    <property type="entry name" value="Porin_4"/>
    <property type="match status" value="1"/>
</dbReference>
<dbReference type="SUPFAM" id="SSF56935">
    <property type="entry name" value="Porins"/>
    <property type="match status" value="1"/>
</dbReference>
<accession>Q48217</accession>
<organism>
    <name type="scientific">Haemophilus influenzae</name>
    <dbReference type="NCBI Taxonomy" id="727"/>
    <lineage>
        <taxon>Bacteria</taxon>
        <taxon>Pseudomonadati</taxon>
        <taxon>Pseudomonadota</taxon>
        <taxon>Gammaproteobacteria</taxon>
        <taxon>Pasteurellales</taxon>
        <taxon>Pasteurellaceae</taxon>
        <taxon>Haemophilus</taxon>
    </lineage>
</organism>
<reference key="1">
    <citation type="journal article" date="1993" name="Microb. Pathog.">
        <title>Genetic analysis of the diversity in outer membrane protein P2 of non-encapsulated Haemophilus influenzae.</title>
        <authorList>
            <person name="Duim B."/>
            <person name="Dankert J."/>
            <person name="Jansen H.M."/>
            <person name="van Alphen L."/>
        </authorList>
    </citation>
    <scope>NUCLEOTIDE SEQUENCE [GENOMIC DNA]</scope>
    <source>
        <strain>3185A</strain>
    </source>
</reference>
<sequence length="361" mass="39696">MKKTLAALIVGAFAASAANAAVVYNNEGTNVELGGRLSVIAEQSNSTRKDQKQQHGELRNAGSHFHIKATHNFGDGFYAQGYLETRLVSDYQSSSDNFGNIITKYAYVTLGNKGFGEVKLGRAKTIADGITSAEDKEYGVLENKEYIPKDGNSVGYTFKGIDGLVLGANYLLAQKREAYKTDAATPGEVIAQAISNGVQVGAKYDANNIIAGIAYGRTNYREDLAELGNKSGKKQQVNGALSTLGYRFSDLGLLVSLDSGYAKTKNYKDKHEKRYFVSPGFQYELMEDTNVYGNFKYERNSVDQGKKAREHAVLFGVDHKLHKQVLTYIEGAYARTRTNDKDKTEKTEKEKSVGVGLRVYF</sequence>
<gene>
    <name type="primary">ompP2</name>
</gene>
<proteinExistence type="inferred from homology"/>
<feature type="signal peptide">
    <location>
        <begin position="1"/>
        <end position="20"/>
    </location>
</feature>
<feature type="chain" id="PRO_0000025266" description="Outer membrane protein P2">
    <location>
        <begin position="21"/>
        <end position="361"/>
    </location>
</feature>
<name>OPP29_HAEIF</name>